<keyword id="KW-0150">Chloroplast</keyword>
<keyword id="KW-0472">Membrane</keyword>
<keyword id="KW-0602">Photosynthesis</keyword>
<keyword id="KW-0603">Photosystem I</keyword>
<keyword id="KW-0934">Plastid</keyword>
<keyword id="KW-0793">Thylakoid</keyword>
<keyword id="KW-0812">Transmembrane</keyword>
<keyword id="KW-1133">Transmembrane helix</keyword>
<dbReference type="EMBL" id="EF380353">
    <property type="protein sequence ID" value="ABR01450.1"/>
    <property type="molecule type" value="Genomic_DNA"/>
</dbReference>
<dbReference type="RefSeq" id="YP_001294372.1">
    <property type="nucleotide sequence ID" value="NC_009601.1"/>
</dbReference>
<dbReference type="SMR" id="A6MMM7"/>
<dbReference type="GeneID" id="5236574"/>
<dbReference type="GO" id="GO:0009535">
    <property type="term" value="C:chloroplast thylakoid membrane"/>
    <property type="evidence" value="ECO:0007669"/>
    <property type="project" value="UniProtKB-SubCell"/>
</dbReference>
<dbReference type="GO" id="GO:0009522">
    <property type="term" value="C:photosystem I"/>
    <property type="evidence" value="ECO:0007669"/>
    <property type="project" value="UniProtKB-KW"/>
</dbReference>
<dbReference type="GO" id="GO:0015979">
    <property type="term" value="P:photosynthesis"/>
    <property type="evidence" value="ECO:0007669"/>
    <property type="project" value="UniProtKB-UniRule"/>
</dbReference>
<dbReference type="Gene3D" id="1.20.5.510">
    <property type="entry name" value="Single helix bin"/>
    <property type="match status" value="1"/>
</dbReference>
<dbReference type="HAMAP" id="MF_00522">
    <property type="entry name" value="PSI_PsaJ"/>
    <property type="match status" value="1"/>
</dbReference>
<dbReference type="InterPro" id="IPR002615">
    <property type="entry name" value="PSI_PsaJ"/>
</dbReference>
<dbReference type="InterPro" id="IPR036062">
    <property type="entry name" value="PSI_PsaJ_sf"/>
</dbReference>
<dbReference type="PANTHER" id="PTHR36082">
    <property type="match status" value="1"/>
</dbReference>
<dbReference type="PANTHER" id="PTHR36082:SF2">
    <property type="entry name" value="PHOTOSYSTEM I REACTION CENTER SUBUNIT IX"/>
    <property type="match status" value="1"/>
</dbReference>
<dbReference type="Pfam" id="PF01701">
    <property type="entry name" value="PSI_PsaJ"/>
    <property type="match status" value="1"/>
</dbReference>
<dbReference type="SUPFAM" id="SSF81544">
    <property type="entry name" value="Subunit IX of photosystem I reaction centre, PsaJ"/>
    <property type="match status" value="1"/>
</dbReference>
<feature type="chain" id="PRO_0000354145" description="Photosystem I reaction center subunit IX">
    <location>
        <begin position="1"/>
        <end position="44"/>
    </location>
</feature>
<feature type="transmembrane region" description="Helical" evidence="1">
    <location>
        <begin position="7"/>
        <end position="27"/>
    </location>
</feature>
<accession>A6MMM7</accession>
<evidence type="ECO:0000255" key="1">
    <source>
        <dbReference type="HAMAP-Rule" id="MF_00522"/>
    </source>
</evidence>
<protein>
    <recommendedName>
        <fullName evidence="1">Photosystem I reaction center subunit IX</fullName>
    </recommendedName>
    <alternativeName>
        <fullName evidence="1">PSI-J</fullName>
    </alternativeName>
</protein>
<organism>
    <name type="scientific">Dioscorea elephantipes</name>
    <name type="common">Elephant's foot yam</name>
    <name type="synonym">Testudinaria elephantipes</name>
    <dbReference type="NCBI Taxonomy" id="145284"/>
    <lineage>
        <taxon>Eukaryota</taxon>
        <taxon>Viridiplantae</taxon>
        <taxon>Streptophyta</taxon>
        <taxon>Embryophyta</taxon>
        <taxon>Tracheophyta</taxon>
        <taxon>Spermatophyta</taxon>
        <taxon>Magnoliopsida</taxon>
        <taxon>Liliopsida</taxon>
        <taxon>Dioscoreales</taxon>
        <taxon>Dioscoreaceae</taxon>
        <taxon>Dioscorea</taxon>
    </lineage>
</organism>
<comment type="function">
    <text evidence="1">May help in the organization of the PsaE and PsaF subunits.</text>
</comment>
<comment type="subcellular location">
    <subcellularLocation>
        <location evidence="1">Plastid</location>
        <location evidence="1">Chloroplast thylakoid membrane</location>
        <topology evidence="1">Single-pass membrane protein</topology>
    </subcellularLocation>
</comment>
<comment type="similarity">
    <text evidence="1">Belongs to the PsaJ family.</text>
</comment>
<sequence>MRNIKTYLSTVPVLTTLWFGSLAGLLIEINRLFPDALLFPFFSF</sequence>
<gene>
    <name evidence="1" type="primary">psaJ</name>
</gene>
<name>PSAJ_DIOEL</name>
<geneLocation type="chloroplast"/>
<reference key="1">
    <citation type="journal article" date="2007" name="Mol. Phylogenet. Evol.">
        <title>Phylogenetic and evolutionary implications of complete chloroplast genome sequences of four early-diverging angiosperms: Buxus (Buxaceae), Chloranthus (Chloranthaceae), Dioscorea (Dioscoreaceae), and Illicium (Schisandraceae).</title>
        <authorList>
            <person name="Hansen D.R."/>
            <person name="Dastidar S.G."/>
            <person name="Cai Z."/>
            <person name="Penaflor C."/>
            <person name="Kuehl J.V."/>
            <person name="Boore J.L."/>
            <person name="Jansen R.K."/>
        </authorList>
    </citation>
    <scope>NUCLEOTIDE SEQUENCE [LARGE SCALE GENOMIC DNA]</scope>
</reference>
<proteinExistence type="inferred from homology"/>